<protein>
    <recommendedName>
        <fullName evidence="1">Serine--tRNA ligase</fullName>
        <ecNumber evidence="1">6.1.1.11</ecNumber>
    </recommendedName>
    <alternativeName>
        <fullName evidence="1">Seryl-tRNA synthetase</fullName>
        <shortName evidence="1">SerRS</shortName>
    </alternativeName>
    <alternativeName>
        <fullName evidence="1">Seryl-tRNA(Ser/Sec) synthetase</fullName>
    </alternativeName>
</protein>
<gene>
    <name evidence="1" type="primary">serS</name>
    <name type="ordered locus">BBta_4414</name>
</gene>
<sequence length="442" mass="48774">MHDIKSIRDNPQGFDAALTRRGLSPQSSHLLAIDERRRAAILASEQAQARRNAASKEIGEAKKAKDDARASALMEEVAKLKTTMPELEAAAKQADEELARELSAIPNLPLDEVPDGKDEHDNVERHVFGARRNYAFAPRPHDEIGAALGMDFESAAKLSGARFVVLKKGLARLERAIGQFMLDLHTTEHGYTEINPPLLVRNDVMFGTGQLPKFEDDQFWAVRGELLIAPDERLKTERLGLIPTAEVALTNLVRESIVDEKELPMRLTALTPCFRAEAGAAGRDTRGMIRQHQFTKVELVSITTPETSKDEHERMLACAEEVLRRLDLHYRVITLCTGDMGFSSQKTYDIEVWMPGQGDGGAFREISSCSVCGDFQARRMDARYRASDGKPRFVHTLNGSGTAVGRALIAVMETYQQADGSIAVPDVLQPYMGGLKVVAAEP</sequence>
<evidence type="ECO:0000255" key="1">
    <source>
        <dbReference type="HAMAP-Rule" id="MF_00176"/>
    </source>
</evidence>
<name>SYS_BRASB</name>
<organism>
    <name type="scientific">Bradyrhizobium sp. (strain BTAi1 / ATCC BAA-1182)</name>
    <dbReference type="NCBI Taxonomy" id="288000"/>
    <lineage>
        <taxon>Bacteria</taxon>
        <taxon>Pseudomonadati</taxon>
        <taxon>Pseudomonadota</taxon>
        <taxon>Alphaproteobacteria</taxon>
        <taxon>Hyphomicrobiales</taxon>
        <taxon>Nitrobacteraceae</taxon>
        <taxon>Bradyrhizobium</taxon>
    </lineage>
</organism>
<dbReference type="EC" id="6.1.1.11" evidence="1"/>
<dbReference type="EMBL" id="CP000494">
    <property type="protein sequence ID" value="ABQ36453.1"/>
    <property type="molecule type" value="Genomic_DNA"/>
</dbReference>
<dbReference type="RefSeq" id="WP_012044450.1">
    <property type="nucleotide sequence ID" value="NC_009485.1"/>
</dbReference>
<dbReference type="SMR" id="A5EJV9"/>
<dbReference type="STRING" id="288000.BBta_4414"/>
<dbReference type="KEGG" id="bbt:BBta_4414"/>
<dbReference type="eggNOG" id="COG0172">
    <property type="taxonomic scope" value="Bacteria"/>
</dbReference>
<dbReference type="HOGENOM" id="CLU_023797_1_1_5"/>
<dbReference type="OrthoDB" id="9804647at2"/>
<dbReference type="UniPathway" id="UPA00906">
    <property type="reaction ID" value="UER00895"/>
</dbReference>
<dbReference type="Proteomes" id="UP000000246">
    <property type="component" value="Chromosome"/>
</dbReference>
<dbReference type="GO" id="GO:0005737">
    <property type="term" value="C:cytoplasm"/>
    <property type="evidence" value="ECO:0007669"/>
    <property type="project" value="UniProtKB-SubCell"/>
</dbReference>
<dbReference type="GO" id="GO:0005524">
    <property type="term" value="F:ATP binding"/>
    <property type="evidence" value="ECO:0007669"/>
    <property type="project" value="UniProtKB-UniRule"/>
</dbReference>
<dbReference type="GO" id="GO:0004828">
    <property type="term" value="F:serine-tRNA ligase activity"/>
    <property type="evidence" value="ECO:0007669"/>
    <property type="project" value="UniProtKB-UniRule"/>
</dbReference>
<dbReference type="GO" id="GO:0016260">
    <property type="term" value="P:selenocysteine biosynthetic process"/>
    <property type="evidence" value="ECO:0007669"/>
    <property type="project" value="UniProtKB-UniRule"/>
</dbReference>
<dbReference type="GO" id="GO:0006434">
    <property type="term" value="P:seryl-tRNA aminoacylation"/>
    <property type="evidence" value="ECO:0007669"/>
    <property type="project" value="UniProtKB-UniRule"/>
</dbReference>
<dbReference type="CDD" id="cd00770">
    <property type="entry name" value="SerRS_core"/>
    <property type="match status" value="1"/>
</dbReference>
<dbReference type="Gene3D" id="3.30.930.10">
    <property type="entry name" value="Bira Bifunctional Protein, Domain 2"/>
    <property type="match status" value="1"/>
</dbReference>
<dbReference type="Gene3D" id="1.10.287.40">
    <property type="entry name" value="Serine-tRNA synthetase, tRNA binding domain"/>
    <property type="match status" value="1"/>
</dbReference>
<dbReference type="HAMAP" id="MF_00176">
    <property type="entry name" value="Ser_tRNA_synth_type1"/>
    <property type="match status" value="1"/>
</dbReference>
<dbReference type="InterPro" id="IPR002314">
    <property type="entry name" value="aa-tRNA-synt_IIb"/>
</dbReference>
<dbReference type="InterPro" id="IPR006195">
    <property type="entry name" value="aa-tRNA-synth_II"/>
</dbReference>
<dbReference type="InterPro" id="IPR045864">
    <property type="entry name" value="aa-tRNA-synth_II/BPL/LPL"/>
</dbReference>
<dbReference type="InterPro" id="IPR002317">
    <property type="entry name" value="Ser-tRNA-ligase_type_1"/>
</dbReference>
<dbReference type="InterPro" id="IPR015866">
    <property type="entry name" value="Ser-tRNA-synth_1_N"/>
</dbReference>
<dbReference type="InterPro" id="IPR042103">
    <property type="entry name" value="SerRS_1_N_sf"/>
</dbReference>
<dbReference type="InterPro" id="IPR033729">
    <property type="entry name" value="SerRS_core"/>
</dbReference>
<dbReference type="InterPro" id="IPR010978">
    <property type="entry name" value="tRNA-bd_arm"/>
</dbReference>
<dbReference type="NCBIfam" id="TIGR00414">
    <property type="entry name" value="serS"/>
    <property type="match status" value="1"/>
</dbReference>
<dbReference type="PANTHER" id="PTHR43697:SF1">
    <property type="entry name" value="SERINE--TRNA LIGASE"/>
    <property type="match status" value="1"/>
</dbReference>
<dbReference type="PANTHER" id="PTHR43697">
    <property type="entry name" value="SERYL-TRNA SYNTHETASE"/>
    <property type="match status" value="1"/>
</dbReference>
<dbReference type="Pfam" id="PF02403">
    <property type="entry name" value="Seryl_tRNA_N"/>
    <property type="match status" value="1"/>
</dbReference>
<dbReference type="Pfam" id="PF00587">
    <property type="entry name" value="tRNA-synt_2b"/>
    <property type="match status" value="1"/>
</dbReference>
<dbReference type="PIRSF" id="PIRSF001529">
    <property type="entry name" value="Ser-tRNA-synth_IIa"/>
    <property type="match status" value="1"/>
</dbReference>
<dbReference type="PRINTS" id="PR00981">
    <property type="entry name" value="TRNASYNTHSER"/>
</dbReference>
<dbReference type="SUPFAM" id="SSF55681">
    <property type="entry name" value="Class II aaRS and biotin synthetases"/>
    <property type="match status" value="1"/>
</dbReference>
<dbReference type="SUPFAM" id="SSF46589">
    <property type="entry name" value="tRNA-binding arm"/>
    <property type="match status" value="1"/>
</dbReference>
<dbReference type="PROSITE" id="PS50862">
    <property type="entry name" value="AA_TRNA_LIGASE_II"/>
    <property type="match status" value="1"/>
</dbReference>
<comment type="function">
    <text evidence="1">Catalyzes the attachment of serine to tRNA(Ser). Is also able to aminoacylate tRNA(Sec) with serine, to form the misacylated tRNA L-seryl-tRNA(Sec), which will be further converted into selenocysteinyl-tRNA(Sec).</text>
</comment>
<comment type="catalytic activity">
    <reaction evidence="1">
        <text>tRNA(Ser) + L-serine + ATP = L-seryl-tRNA(Ser) + AMP + diphosphate + H(+)</text>
        <dbReference type="Rhea" id="RHEA:12292"/>
        <dbReference type="Rhea" id="RHEA-COMP:9669"/>
        <dbReference type="Rhea" id="RHEA-COMP:9703"/>
        <dbReference type="ChEBI" id="CHEBI:15378"/>
        <dbReference type="ChEBI" id="CHEBI:30616"/>
        <dbReference type="ChEBI" id="CHEBI:33019"/>
        <dbReference type="ChEBI" id="CHEBI:33384"/>
        <dbReference type="ChEBI" id="CHEBI:78442"/>
        <dbReference type="ChEBI" id="CHEBI:78533"/>
        <dbReference type="ChEBI" id="CHEBI:456215"/>
        <dbReference type="EC" id="6.1.1.11"/>
    </reaction>
</comment>
<comment type="catalytic activity">
    <reaction evidence="1">
        <text>tRNA(Sec) + L-serine + ATP = L-seryl-tRNA(Sec) + AMP + diphosphate + H(+)</text>
        <dbReference type="Rhea" id="RHEA:42580"/>
        <dbReference type="Rhea" id="RHEA-COMP:9742"/>
        <dbReference type="Rhea" id="RHEA-COMP:10128"/>
        <dbReference type="ChEBI" id="CHEBI:15378"/>
        <dbReference type="ChEBI" id="CHEBI:30616"/>
        <dbReference type="ChEBI" id="CHEBI:33019"/>
        <dbReference type="ChEBI" id="CHEBI:33384"/>
        <dbReference type="ChEBI" id="CHEBI:78442"/>
        <dbReference type="ChEBI" id="CHEBI:78533"/>
        <dbReference type="ChEBI" id="CHEBI:456215"/>
        <dbReference type="EC" id="6.1.1.11"/>
    </reaction>
</comment>
<comment type="pathway">
    <text evidence="1">Aminoacyl-tRNA biosynthesis; selenocysteinyl-tRNA(Sec) biosynthesis; L-seryl-tRNA(Sec) from L-serine and tRNA(Sec): step 1/1.</text>
</comment>
<comment type="subunit">
    <text evidence="1">Homodimer. The tRNA molecule binds across the dimer.</text>
</comment>
<comment type="subcellular location">
    <subcellularLocation>
        <location evidence="1">Cytoplasm</location>
    </subcellularLocation>
</comment>
<comment type="domain">
    <text evidence="1">Consists of two distinct domains, a catalytic core and a N-terminal extension that is involved in tRNA binding.</text>
</comment>
<comment type="similarity">
    <text evidence="1">Belongs to the class-II aminoacyl-tRNA synthetase family. Type-1 seryl-tRNA synthetase subfamily.</text>
</comment>
<accession>A5EJV9</accession>
<keyword id="KW-0030">Aminoacyl-tRNA synthetase</keyword>
<keyword id="KW-0067">ATP-binding</keyword>
<keyword id="KW-0963">Cytoplasm</keyword>
<keyword id="KW-0436">Ligase</keyword>
<keyword id="KW-0547">Nucleotide-binding</keyword>
<keyword id="KW-0648">Protein biosynthesis</keyword>
<keyword id="KW-1185">Reference proteome</keyword>
<reference key="1">
    <citation type="journal article" date="2007" name="Science">
        <title>Legumes symbioses: absence of nod genes in photosynthetic bradyrhizobia.</title>
        <authorList>
            <person name="Giraud E."/>
            <person name="Moulin L."/>
            <person name="Vallenet D."/>
            <person name="Barbe V."/>
            <person name="Cytryn E."/>
            <person name="Avarre J.-C."/>
            <person name="Jaubert M."/>
            <person name="Simon D."/>
            <person name="Cartieaux F."/>
            <person name="Prin Y."/>
            <person name="Bena G."/>
            <person name="Hannibal L."/>
            <person name="Fardoux J."/>
            <person name="Kojadinovic M."/>
            <person name="Vuillet L."/>
            <person name="Lajus A."/>
            <person name="Cruveiller S."/>
            <person name="Rouy Z."/>
            <person name="Mangenot S."/>
            <person name="Segurens B."/>
            <person name="Dossat C."/>
            <person name="Franck W.L."/>
            <person name="Chang W.-S."/>
            <person name="Saunders E."/>
            <person name="Bruce D."/>
            <person name="Richardson P."/>
            <person name="Normand P."/>
            <person name="Dreyfus B."/>
            <person name="Pignol D."/>
            <person name="Stacey G."/>
            <person name="Emerich D."/>
            <person name="Vermeglio A."/>
            <person name="Medigue C."/>
            <person name="Sadowsky M."/>
        </authorList>
    </citation>
    <scope>NUCLEOTIDE SEQUENCE [LARGE SCALE GENOMIC DNA]</scope>
    <source>
        <strain>BTAi1 / ATCC BAA-1182</strain>
    </source>
</reference>
<proteinExistence type="inferred from homology"/>
<feature type="chain" id="PRO_1000019623" description="Serine--tRNA ligase">
    <location>
        <begin position="1"/>
        <end position="442"/>
    </location>
</feature>
<feature type="binding site" evidence="1">
    <location>
        <begin position="244"/>
        <end position="246"/>
    </location>
    <ligand>
        <name>L-serine</name>
        <dbReference type="ChEBI" id="CHEBI:33384"/>
    </ligand>
</feature>
<feature type="binding site" evidence="1">
    <location>
        <begin position="275"/>
        <end position="277"/>
    </location>
    <ligand>
        <name>ATP</name>
        <dbReference type="ChEBI" id="CHEBI:30616"/>
    </ligand>
</feature>
<feature type="binding site" evidence="1">
    <location>
        <position position="298"/>
    </location>
    <ligand>
        <name>L-serine</name>
        <dbReference type="ChEBI" id="CHEBI:33384"/>
    </ligand>
</feature>
<feature type="binding site" evidence="1">
    <location>
        <begin position="365"/>
        <end position="368"/>
    </location>
    <ligand>
        <name>ATP</name>
        <dbReference type="ChEBI" id="CHEBI:30616"/>
    </ligand>
</feature>
<feature type="binding site" evidence="1">
    <location>
        <position position="400"/>
    </location>
    <ligand>
        <name>L-serine</name>
        <dbReference type="ChEBI" id="CHEBI:33384"/>
    </ligand>
</feature>